<organism>
    <name type="scientific">Arabidopsis thaliana</name>
    <name type="common">Mouse-ear cress</name>
    <dbReference type="NCBI Taxonomy" id="3702"/>
    <lineage>
        <taxon>Eukaryota</taxon>
        <taxon>Viridiplantae</taxon>
        <taxon>Streptophyta</taxon>
        <taxon>Embryophyta</taxon>
        <taxon>Tracheophyta</taxon>
        <taxon>Spermatophyta</taxon>
        <taxon>Magnoliopsida</taxon>
        <taxon>eudicotyledons</taxon>
        <taxon>Gunneridae</taxon>
        <taxon>Pentapetalae</taxon>
        <taxon>rosids</taxon>
        <taxon>malvids</taxon>
        <taxon>Brassicales</taxon>
        <taxon>Brassicaceae</taxon>
        <taxon>Camelineae</taxon>
        <taxon>Arabidopsis</taxon>
    </lineage>
</organism>
<name>Y5597_ARATH</name>
<comment type="interaction">
    <interactant intactId="EBI-17071988">
        <id>Q9FN92</id>
    </interactant>
    <interactant intactId="EBI-15880405">
        <id>Q9SCZ4</id>
        <label>FER</label>
    </interactant>
    <organismsDiffer>false</organismsDiffer>
    <experiments>3</experiments>
</comment>
<comment type="interaction">
    <interactant intactId="EBI-17071988">
        <id>Q9FN92</id>
    </interactant>
    <interactant intactId="EBI-22028097">
        <id>Q9LX66</id>
        <label>HERK1</label>
    </interactant>
    <organismsDiffer>false</organismsDiffer>
    <experiments>4</experiments>
</comment>
<comment type="interaction">
    <interactant intactId="EBI-17071988">
        <id>Q9FN92</id>
    </interactant>
    <interactant intactId="EBI-21914693">
        <id>B3GS44</id>
        <label>LRE</label>
    </interactant>
    <organismsDiffer>false</organismsDiffer>
    <experiments>2</experiments>
</comment>
<comment type="subcellular location">
    <subcellularLocation>
        <location evidence="1">Cell membrane</location>
        <topology evidence="1">Single-pass type I membrane protein</topology>
    </subcellularLocation>
</comment>
<comment type="similarity">
    <text evidence="3">Belongs to the protein kinase superfamily. Ser/Thr protein kinase family.</text>
</comment>
<feature type="signal peptide" evidence="2">
    <location>
        <begin position="1"/>
        <end position="24"/>
    </location>
</feature>
<feature type="chain" id="PRO_0000386563" description="Probable receptor-like protein kinase At5g59700">
    <location>
        <begin position="25"/>
        <end position="829"/>
    </location>
</feature>
<feature type="topological domain" description="Extracellular" evidence="2">
    <location>
        <begin position="25"/>
        <end position="406"/>
    </location>
</feature>
<feature type="transmembrane region" description="Helical" evidence="2">
    <location>
        <begin position="407"/>
        <end position="427"/>
    </location>
</feature>
<feature type="topological domain" description="Cytoplasmic" evidence="2">
    <location>
        <begin position="428"/>
        <end position="829"/>
    </location>
</feature>
<feature type="domain" description="Protein kinase" evidence="3">
    <location>
        <begin position="482"/>
        <end position="755"/>
    </location>
</feature>
<feature type="active site" description="Proton acceptor" evidence="3 4">
    <location>
        <position position="606"/>
    </location>
</feature>
<feature type="binding site" evidence="3">
    <location>
        <begin position="488"/>
        <end position="496"/>
    </location>
    <ligand>
        <name>ATP</name>
        <dbReference type="ChEBI" id="CHEBI:30616"/>
    </ligand>
</feature>
<feature type="binding site" evidence="3">
    <location>
        <position position="510"/>
    </location>
    <ligand>
        <name>ATP</name>
        <dbReference type="ChEBI" id="CHEBI:30616"/>
    </ligand>
</feature>
<feature type="glycosylation site" description="N-linked (GlcNAc...) asparagine" evidence="2">
    <location>
        <position position="40"/>
    </location>
</feature>
<feature type="glycosylation site" description="N-linked (GlcNAc...) asparagine" evidence="2">
    <location>
        <position position="216"/>
    </location>
</feature>
<feature type="glycosylation site" description="N-linked (GlcNAc...) asparagine" evidence="2">
    <location>
        <position position="279"/>
    </location>
</feature>
<feature type="glycosylation site" description="N-linked (GlcNAc...) asparagine" evidence="2">
    <location>
        <position position="380"/>
    </location>
</feature>
<dbReference type="EC" id="2.7.11.-"/>
<dbReference type="EMBL" id="AB006705">
    <property type="protein sequence ID" value="BAB09508.1"/>
    <property type="molecule type" value="Genomic_DNA"/>
</dbReference>
<dbReference type="EMBL" id="CP002688">
    <property type="protein sequence ID" value="AED97221.1"/>
    <property type="molecule type" value="Genomic_DNA"/>
</dbReference>
<dbReference type="RefSeq" id="NP_200778.1">
    <property type="nucleotide sequence ID" value="NM_125362.3"/>
</dbReference>
<dbReference type="SMR" id="Q9FN92"/>
<dbReference type="BioGRID" id="21335">
    <property type="interactions" value="13"/>
</dbReference>
<dbReference type="FunCoup" id="Q9FN92">
    <property type="interactions" value="26"/>
</dbReference>
<dbReference type="IntAct" id="Q9FN92">
    <property type="interactions" value="15"/>
</dbReference>
<dbReference type="STRING" id="3702.Q9FN92"/>
<dbReference type="GlyGen" id="Q9FN92">
    <property type="glycosylation" value="5 sites"/>
</dbReference>
<dbReference type="iPTMnet" id="Q9FN92"/>
<dbReference type="PaxDb" id="3702-AT5G59700.1"/>
<dbReference type="ProteomicsDB" id="242907"/>
<dbReference type="EnsemblPlants" id="AT5G59700.1">
    <property type="protein sequence ID" value="AT5G59700.1"/>
    <property type="gene ID" value="AT5G59700"/>
</dbReference>
<dbReference type="GeneID" id="836091"/>
<dbReference type="Gramene" id="AT5G59700.1">
    <property type="protein sequence ID" value="AT5G59700.1"/>
    <property type="gene ID" value="AT5G59700"/>
</dbReference>
<dbReference type="KEGG" id="ath:AT5G59700"/>
<dbReference type="Araport" id="AT5G59700"/>
<dbReference type="TAIR" id="AT5G59700"/>
<dbReference type="eggNOG" id="KOG1187">
    <property type="taxonomic scope" value="Eukaryota"/>
</dbReference>
<dbReference type="HOGENOM" id="CLU_000288_42_1_1"/>
<dbReference type="InParanoid" id="Q9FN92"/>
<dbReference type="OMA" id="CHGYVPV"/>
<dbReference type="PhylomeDB" id="Q9FN92"/>
<dbReference type="PRO" id="PR:Q9FN92"/>
<dbReference type="Proteomes" id="UP000006548">
    <property type="component" value="Chromosome 5"/>
</dbReference>
<dbReference type="ExpressionAtlas" id="Q9FN92">
    <property type="expression patterns" value="baseline and differential"/>
</dbReference>
<dbReference type="GO" id="GO:0005886">
    <property type="term" value="C:plasma membrane"/>
    <property type="evidence" value="ECO:0007005"/>
    <property type="project" value="TAIR"/>
</dbReference>
<dbReference type="GO" id="GO:0009506">
    <property type="term" value="C:plasmodesma"/>
    <property type="evidence" value="ECO:0007005"/>
    <property type="project" value="TAIR"/>
</dbReference>
<dbReference type="GO" id="GO:0005524">
    <property type="term" value="F:ATP binding"/>
    <property type="evidence" value="ECO:0007669"/>
    <property type="project" value="UniProtKB-KW"/>
</dbReference>
<dbReference type="GO" id="GO:0004674">
    <property type="term" value="F:protein serine/threonine kinase activity"/>
    <property type="evidence" value="ECO:0007669"/>
    <property type="project" value="UniProtKB-KW"/>
</dbReference>
<dbReference type="GO" id="GO:0004714">
    <property type="term" value="F:transmembrane receptor protein tyrosine kinase activity"/>
    <property type="evidence" value="ECO:0007669"/>
    <property type="project" value="InterPro"/>
</dbReference>
<dbReference type="CDD" id="cd14066">
    <property type="entry name" value="STKc_IRAK"/>
    <property type="match status" value="1"/>
</dbReference>
<dbReference type="FunFam" id="2.60.120.430:FF:000005">
    <property type="entry name" value="Putative receptor-like protein kinase"/>
    <property type="match status" value="1"/>
</dbReference>
<dbReference type="FunFam" id="1.10.510.10:FF:000058">
    <property type="entry name" value="Receptor-like protein kinase FERONIA"/>
    <property type="match status" value="1"/>
</dbReference>
<dbReference type="FunFam" id="2.60.120.430:FF:000001">
    <property type="entry name" value="Receptor-like protein kinase FERONIA"/>
    <property type="match status" value="1"/>
</dbReference>
<dbReference type="FunFam" id="3.30.200.20:FF:000039">
    <property type="entry name" value="receptor-like protein kinase FERONIA"/>
    <property type="match status" value="1"/>
</dbReference>
<dbReference type="Gene3D" id="2.60.120.430">
    <property type="entry name" value="Galactose-binding lectin"/>
    <property type="match status" value="2"/>
</dbReference>
<dbReference type="Gene3D" id="3.30.200.20">
    <property type="entry name" value="Phosphorylase Kinase, domain 1"/>
    <property type="match status" value="1"/>
</dbReference>
<dbReference type="Gene3D" id="1.10.510.10">
    <property type="entry name" value="Transferase(Phosphotransferase) domain 1"/>
    <property type="match status" value="1"/>
</dbReference>
<dbReference type="InterPro" id="IPR045272">
    <property type="entry name" value="ANXUR1/2-like"/>
</dbReference>
<dbReference type="InterPro" id="IPR011009">
    <property type="entry name" value="Kinase-like_dom_sf"/>
</dbReference>
<dbReference type="InterPro" id="IPR024788">
    <property type="entry name" value="Malectin-like_Carb-bd_dom"/>
</dbReference>
<dbReference type="InterPro" id="IPR000719">
    <property type="entry name" value="Prot_kinase_dom"/>
</dbReference>
<dbReference type="InterPro" id="IPR017441">
    <property type="entry name" value="Protein_kinase_ATP_BS"/>
</dbReference>
<dbReference type="InterPro" id="IPR001245">
    <property type="entry name" value="Ser-Thr/Tyr_kinase_cat_dom"/>
</dbReference>
<dbReference type="InterPro" id="IPR008271">
    <property type="entry name" value="Ser/Thr_kinase_AS"/>
</dbReference>
<dbReference type="PANTHER" id="PTHR27003">
    <property type="entry name" value="OS07G0166700 PROTEIN"/>
    <property type="match status" value="1"/>
</dbReference>
<dbReference type="PANTHER" id="PTHR27003:SF401">
    <property type="entry name" value="PROTEIN KINASE DOMAIN-CONTAINING PROTEIN"/>
    <property type="match status" value="1"/>
</dbReference>
<dbReference type="Pfam" id="PF12819">
    <property type="entry name" value="Malectin_like"/>
    <property type="match status" value="1"/>
</dbReference>
<dbReference type="Pfam" id="PF07714">
    <property type="entry name" value="PK_Tyr_Ser-Thr"/>
    <property type="match status" value="1"/>
</dbReference>
<dbReference type="SMART" id="SM00220">
    <property type="entry name" value="S_TKc"/>
    <property type="match status" value="1"/>
</dbReference>
<dbReference type="SUPFAM" id="SSF56112">
    <property type="entry name" value="Protein kinase-like (PK-like)"/>
    <property type="match status" value="1"/>
</dbReference>
<dbReference type="PROSITE" id="PS00107">
    <property type="entry name" value="PROTEIN_KINASE_ATP"/>
    <property type="match status" value="1"/>
</dbReference>
<dbReference type="PROSITE" id="PS50011">
    <property type="entry name" value="PROTEIN_KINASE_DOM"/>
    <property type="match status" value="1"/>
</dbReference>
<dbReference type="PROSITE" id="PS00108">
    <property type="entry name" value="PROTEIN_KINASE_ST"/>
    <property type="match status" value="1"/>
</dbReference>
<gene>
    <name type="ordered locus">At5g59700</name>
    <name type="ORF">T5I8.2</name>
</gene>
<protein>
    <recommendedName>
        <fullName>Probable receptor-like protein kinase At5g59700</fullName>
        <ecNumber>2.7.11.-</ecNumber>
    </recommendedName>
</protein>
<reference key="1">
    <citation type="journal article" date="1997" name="DNA Res.">
        <title>Structural analysis of Arabidopsis thaliana chromosome 5. II. Sequence features of the regions of 1,044,062 bp covered by thirteen physically assigned P1 clones.</title>
        <authorList>
            <person name="Kotani H."/>
            <person name="Nakamura Y."/>
            <person name="Sato S."/>
            <person name="Kaneko T."/>
            <person name="Asamizu E."/>
            <person name="Miyajima N."/>
            <person name="Tabata S."/>
        </authorList>
    </citation>
    <scope>NUCLEOTIDE SEQUENCE [LARGE SCALE GENOMIC DNA]</scope>
    <source>
        <strain>cv. Columbia</strain>
    </source>
</reference>
<reference key="2">
    <citation type="journal article" date="2017" name="Plant J.">
        <title>Araport11: a complete reannotation of the Arabidopsis thaliana reference genome.</title>
        <authorList>
            <person name="Cheng C.Y."/>
            <person name="Krishnakumar V."/>
            <person name="Chan A.P."/>
            <person name="Thibaud-Nissen F."/>
            <person name="Schobel S."/>
            <person name="Town C.D."/>
        </authorList>
    </citation>
    <scope>GENOME REANNOTATION</scope>
    <source>
        <strain>cv. Columbia</strain>
    </source>
</reference>
<reference key="3">
    <citation type="journal article" date="2009" name="Mol. Plant">
        <title>Diverse transcriptional programs associated with environmental stress and hormones in the Arabidopsis receptor-like kinase gene family.</title>
        <authorList>
            <person name="Chae L."/>
            <person name="Sudat S."/>
            <person name="Dudoit S."/>
            <person name="Zhu T."/>
            <person name="Luan S."/>
        </authorList>
    </citation>
    <scope>GENE FAMILY</scope>
</reference>
<accession>Q9FN92</accession>
<evidence type="ECO:0000250" key="1"/>
<evidence type="ECO:0000255" key="2"/>
<evidence type="ECO:0000255" key="3">
    <source>
        <dbReference type="PROSITE-ProRule" id="PRU00159"/>
    </source>
</evidence>
<evidence type="ECO:0000255" key="4">
    <source>
        <dbReference type="PROSITE-ProRule" id="PRU10027"/>
    </source>
</evidence>
<proteinExistence type="evidence at protein level"/>
<keyword id="KW-0067">ATP-binding</keyword>
<keyword id="KW-1003">Cell membrane</keyword>
<keyword id="KW-0325">Glycoprotein</keyword>
<keyword id="KW-0418">Kinase</keyword>
<keyword id="KW-0472">Membrane</keyword>
<keyword id="KW-0547">Nucleotide-binding</keyword>
<keyword id="KW-1185">Reference proteome</keyword>
<keyword id="KW-0723">Serine/threonine-protein kinase</keyword>
<keyword id="KW-0732">Signal</keyword>
<keyword id="KW-0808">Transferase</keyword>
<keyword id="KW-0812">Transmembrane</keyword>
<keyword id="KW-1133">Transmembrane helix</keyword>
<sequence>MGGEKFGFLIWILSIPCLIFLCYGYVPVDNYLINCGSSTNVTVTSRVFISDNLASNFLTSPNEILAASNRNSNSDIYQTARIFTGISKYRFSVARGRHWIRLHFNPFQYQNFQMVSAKFSVSSETHVLLSDFTVSSRVMKEYSLNVATDHLELTFTPSGDSFAFLNALEVVSVPDTLFSGDPSFAGSPGKFQGLSWQALETVYRVNMGGPRVTPSNDTLSRIWEPDSEFLVEKNLVKSVSKIASVDYVPGFATEETAPRTVYGTCTEMNSADNPSSNFNVTWDFDVDPGFQYFLRFHFCDIVSKALNQLYFNLYVDSMDVVENLDLSSYLSNTLSGAYAMDFVTGSAKLTKRIRVSIGRSSVHTDYPTAILNGLEIMKMNNSKSQLSIGTFLPSGSSSTTKKNVGMIIGLTIGSLLALVVLGGFFVLYKKRGRDQDGNSKTWIPLSSNGTTSSSNGTTLASIASNSSYRIPLVAVKEATNSFDENRAIGVGGFGKVYKGELHDGTKVAVKRANPKSQQGLAEFRTEIEMLSQFRHRHLVSLIGYCDENNEMILVYEYMENGTLKSHLYGSGLLSLSWKQRLEICIGSARGLHYLHTGDAKPVIHRDVKSANILLDENLMAKVADFGLSKTGPEIDQTHVSTAVKGSFGYLDPEYFRRQQLTEKSDVYSFGVVMFEVLCARPVIDPTLTREMVNLAEWAMKWQKKGQLEHIIDPSLRGKIRPDSLRKFGETGEKCLADYGVDRPSMGDVLWNLEYALQLQEAVVDGDPEDSTNMIGELPLRFNDYNHGDTSVNFSVAKEGRFDEEESSVDDSSGVSMSKVFSQLIKSEGR</sequence>